<name>EGY2_ARATH</name>
<keyword id="KW-0025">Alternative splicing</keyword>
<keyword id="KW-0150">Chloroplast</keyword>
<keyword id="KW-0378">Hydrolase</keyword>
<keyword id="KW-0472">Membrane</keyword>
<keyword id="KW-0482">Metalloprotease</keyword>
<keyword id="KW-0934">Plastid</keyword>
<keyword id="KW-0645">Protease</keyword>
<keyword id="KW-1185">Reference proteome</keyword>
<keyword id="KW-0809">Transit peptide</keyword>
<keyword id="KW-0812">Transmembrane</keyword>
<keyword id="KW-1133">Transmembrane helix</keyword>
<accession>Q9FFK3</accession>
<proteinExistence type="inferred from homology"/>
<organism>
    <name type="scientific">Arabidopsis thaliana</name>
    <name type="common">Mouse-ear cress</name>
    <dbReference type="NCBI Taxonomy" id="3702"/>
    <lineage>
        <taxon>Eukaryota</taxon>
        <taxon>Viridiplantae</taxon>
        <taxon>Streptophyta</taxon>
        <taxon>Embryophyta</taxon>
        <taxon>Tracheophyta</taxon>
        <taxon>Spermatophyta</taxon>
        <taxon>Magnoliopsida</taxon>
        <taxon>eudicotyledons</taxon>
        <taxon>Gunneridae</taxon>
        <taxon>Pentapetalae</taxon>
        <taxon>rosids</taxon>
        <taxon>malvids</taxon>
        <taxon>Brassicales</taxon>
        <taxon>Brassicaceae</taxon>
        <taxon>Camelineae</taxon>
        <taxon>Arabidopsis</taxon>
    </lineage>
</organism>
<comment type="function">
    <text evidence="1">Probable membrane-associated metalloprotease that may be involved in chloroplast development.</text>
</comment>
<comment type="subcellular location">
    <subcellularLocation>
        <location evidence="4">Plastid</location>
        <location evidence="4">Chloroplast membrane</location>
        <topology evidence="4">Multi-pass membrane protein</topology>
    </subcellularLocation>
</comment>
<comment type="alternative products">
    <event type="alternative splicing"/>
    <isoform>
        <id>Q9FFK3-1</id>
        <name>1</name>
        <sequence type="displayed"/>
    </isoform>
    <text>A number of isoforms are produced. According to EST sequences.</text>
</comment>
<comment type="similarity">
    <text evidence="4">Belongs to the peptidase M50B family.</text>
</comment>
<dbReference type="EC" id="3.4.24.-"/>
<dbReference type="EMBL" id="AB005237">
    <property type="protein sequence ID" value="BAB09668.1"/>
    <property type="molecule type" value="Genomic_DNA"/>
</dbReference>
<dbReference type="EMBL" id="CP002688">
    <property type="protein sequence ID" value="AED90918.1"/>
    <property type="molecule type" value="Genomic_DNA"/>
</dbReference>
<dbReference type="RefSeq" id="NP_196193.1">
    <molecule id="Q9FFK3-1"/>
    <property type="nucleotide sequence ID" value="NM_120656.3"/>
</dbReference>
<dbReference type="FunCoup" id="Q9FFK3">
    <property type="interactions" value="1135"/>
</dbReference>
<dbReference type="STRING" id="3702.Q9FFK3"/>
<dbReference type="MEROPS" id="M50.A01"/>
<dbReference type="iPTMnet" id="Q9FFK3"/>
<dbReference type="PaxDb" id="3702-AT5G05740.1"/>
<dbReference type="ProteomicsDB" id="220756">
    <molecule id="Q9FFK3-1"/>
</dbReference>
<dbReference type="EnsemblPlants" id="AT5G05740.1">
    <molecule id="Q9FFK3-1"/>
    <property type="protein sequence ID" value="AT5G05740.1"/>
    <property type="gene ID" value="AT5G05740"/>
</dbReference>
<dbReference type="GeneID" id="830458"/>
<dbReference type="Gramene" id="AT5G05740.1">
    <molecule id="Q9FFK3-1"/>
    <property type="protein sequence ID" value="AT5G05740.1"/>
    <property type="gene ID" value="AT5G05740"/>
</dbReference>
<dbReference type="KEGG" id="ath:AT5G05740"/>
<dbReference type="Araport" id="AT5G05740"/>
<dbReference type="TAIR" id="AT5G05740">
    <property type="gene designation" value="EGY2"/>
</dbReference>
<dbReference type="eggNOG" id="ENOG502QVZT">
    <property type="taxonomic scope" value="Eukaryota"/>
</dbReference>
<dbReference type="InParanoid" id="Q9FFK3"/>
<dbReference type="OrthoDB" id="5738at2759"/>
<dbReference type="PhylomeDB" id="Q9FFK3"/>
<dbReference type="PRO" id="PR:Q9FFK3"/>
<dbReference type="Proteomes" id="UP000006548">
    <property type="component" value="Chromosome 5"/>
</dbReference>
<dbReference type="ExpressionAtlas" id="Q9FFK3">
    <property type="expression patterns" value="baseline and differential"/>
</dbReference>
<dbReference type="GO" id="GO:0009507">
    <property type="term" value="C:chloroplast"/>
    <property type="evidence" value="ECO:0007005"/>
    <property type="project" value="TAIR"/>
</dbReference>
<dbReference type="GO" id="GO:0031969">
    <property type="term" value="C:chloroplast membrane"/>
    <property type="evidence" value="ECO:0007669"/>
    <property type="project" value="UniProtKB-SubCell"/>
</dbReference>
<dbReference type="GO" id="GO:0009535">
    <property type="term" value="C:chloroplast thylakoid membrane"/>
    <property type="evidence" value="ECO:0007005"/>
    <property type="project" value="TAIR"/>
</dbReference>
<dbReference type="GO" id="GO:0008237">
    <property type="term" value="F:metallopeptidase activity"/>
    <property type="evidence" value="ECO:0007669"/>
    <property type="project" value="UniProtKB-KW"/>
</dbReference>
<dbReference type="GO" id="GO:0006508">
    <property type="term" value="P:proteolysis"/>
    <property type="evidence" value="ECO:0007669"/>
    <property type="project" value="UniProtKB-KW"/>
</dbReference>
<dbReference type="CDD" id="cd06160">
    <property type="entry name" value="S2P-M50_like_2"/>
    <property type="match status" value="1"/>
</dbReference>
<dbReference type="InterPro" id="IPR044838">
    <property type="entry name" value="EGY1-like"/>
</dbReference>
<dbReference type="InterPro" id="IPR008915">
    <property type="entry name" value="Peptidase_M50"/>
</dbReference>
<dbReference type="PANTHER" id="PTHR31412">
    <property type="entry name" value="ZINC METALLOPROTEASE EGY1"/>
    <property type="match status" value="1"/>
</dbReference>
<dbReference type="PANTHER" id="PTHR31412:SF5">
    <property type="entry name" value="ZINC METALLOPROTEASE EGY2, CHLOROPLASTIC-RELATED"/>
    <property type="match status" value="1"/>
</dbReference>
<dbReference type="Pfam" id="PF02163">
    <property type="entry name" value="Peptidase_M50"/>
    <property type="match status" value="1"/>
</dbReference>
<dbReference type="PROSITE" id="PS00142">
    <property type="entry name" value="ZINC_PROTEASE"/>
    <property type="match status" value="1"/>
</dbReference>
<protein>
    <recommendedName>
        <fullName>Probable zinc metalloprotease EGY2, chloroplastic</fullName>
        <ecNumber>3.4.24.-</ecNumber>
    </recommendedName>
    <alternativeName>
        <fullName>Protein ETHYLENE-DEPENDENT GRAVITROPISM-DEFICIENT AND YELLOW-GREEN 2</fullName>
    </alternativeName>
</protein>
<feature type="transit peptide" description="Chloroplast" evidence="2">
    <location>
        <begin position="1"/>
        <end position="64"/>
    </location>
</feature>
<feature type="chain" id="PRO_0000428647" description="Probable zinc metalloprotease EGY2, chloroplastic">
    <location>
        <begin position="65"/>
        <end position="556"/>
    </location>
</feature>
<feature type="transmembrane region" description="Helical" evidence="2">
    <location>
        <begin position="267"/>
        <end position="287"/>
    </location>
</feature>
<feature type="transmembrane region" description="Helical" evidence="2">
    <location>
        <begin position="311"/>
        <end position="331"/>
    </location>
</feature>
<feature type="transmembrane region" description="Helical" evidence="2">
    <location>
        <begin position="336"/>
        <end position="356"/>
    </location>
</feature>
<feature type="transmembrane region" description="Helical" evidence="2">
    <location>
        <begin position="374"/>
        <end position="394"/>
    </location>
</feature>
<feature type="transmembrane region" description="Helical" evidence="2">
    <location>
        <begin position="437"/>
        <end position="457"/>
    </location>
</feature>
<feature type="transmembrane region" description="Helical" evidence="2">
    <location>
        <begin position="484"/>
        <end position="504"/>
    </location>
</feature>
<feature type="transmembrane region" description="Helical" evidence="2">
    <location>
        <begin position="527"/>
        <end position="547"/>
    </location>
</feature>
<feature type="region of interest" description="Disordered" evidence="3">
    <location>
        <begin position="63"/>
        <end position="133"/>
    </location>
</feature>
<gene>
    <name type="primary">EGY2</name>
    <name type="ordered locus">At5g05740</name>
    <name type="ORF">MJJ3.15</name>
</gene>
<reference key="1">
    <citation type="journal article" date="1997" name="DNA Res.">
        <title>Structural analysis of Arabidopsis thaliana chromosome 5. I. Sequence features of the 1.6 Mb regions covered by twenty physically assigned P1 clones.</title>
        <authorList>
            <person name="Sato S."/>
            <person name="Kotani H."/>
            <person name="Nakamura Y."/>
            <person name="Kaneko T."/>
            <person name="Asamizu E."/>
            <person name="Fukami M."/>
            <person name="Miyajima N."/>
            <person name="Tabata S."/>
        </authorList>
    </citation>
    <scope>NUCLEOTIDE SEQUENCE [LARGE SCALE GENOMIC DNA]</scope>
    <source>
        <strain>cv. Columbia</strain>
    </source>
</reference>
<reference key="2">
    <citation type="journal article" date="2017" name="Plant J.">
        <title>Araport11: a complete reannotation of the Arabidopsis thaliana reference genome.</title>
        <authorList>
            <person name="Cheng C.Y."/>
            <person name="Krishnakumar V."/>
            <person name="Chan A.P."/>
            <person name="Thibaud-Nissen F."/>
            <person name="Schobel S."/>
            <person name="Town C.D."/>
        </authorList>
    </citation>
    <scope>GENOME REANNOTATION</scope>
    <source>
        <strain>cv. Columbia</strain>
    </source>
</reference>
<reference key="3">
    <citation type="journal article" date="2005" name="Plant J.">
        <title>EGY1 encodes a membrane-associated and ATP-independent metalloprotease that is required for chloroplast development.</title>
        <authorList>
            <person name="Chen G."/>
            <person name="Bi Y.R."/>
            <person name="Li N."/>
        </authorList>
    </citation>
    <scope>GENE FAMILY</scope>
</reference>
<evidence type="ECO:0000250" key="1"/>
<evidence type="ECO:0000255" key="2"/>
<evidence type="ECO:0000256" key="3">
    <source>
        <dbReference type="SAM" id="MobiDB-lite"/>
    </source>
</evidence>
<evidence type="ECO:0000305" key="4"/>
<sequence length="556" mass="60064">MNLAVASFRGNFGVLSQCSSCCSLQFQPFVAATSSLNFGQTGTSRRKKDLKLERVFRKRETLVRVTETQTEPEGNDDEDNKEGKESSADDPPTKIPTELNSQSTVVNEAPGNEEENKAQFSSQDGDKLEVSSGSPLPGVNVSIIIHVIYKDDSIMFSGCLSFIKSCCEQPLQLDDSMRLPKETIDILRGQVFGFDTFFVTSQEPYEGGVLFKGNLRGKPATSYEKIKTRMENNFGDQYKLFLLTNPEDDKPVAVVVPRRSLEPETTAVPEWFAAGSFGLVALFTLFLRNVPALQSDLLSAFDNLELLKDGLPGALVTALVLGVHELGHILVANSLGIKLGVPFFVPSWQIGSFGAITRIKNIVAKREDLLKVAAAGPLAGFSLGLILFLIGLFVPPSDGIGVVVDASVFHESFLAGGIAKLLLGDALKEGTSISLNPLVIWAWAGLLINGINSIPAGELDGGKIAFSIWGRKTATRLTGASIALLGLSALFSDVAFYWVVLIFFLQRGPIAPLAEEITVPDDKYVSLGILVLFLSLLVCLPYPFAFTGNEAMMIGL</sequence>